<feature type="chain" id="PRO_1000086957" description="NADH-quinone oxidoreductase subunit I">
    <location>
        <begin position="1"/>
        <end position="159"/>
    </location>
</feature>
<feature type="domain" description="4Fe-4S ferredoxin-type 1" evidence="1">
    <location>
        <begin position="51"/>
        <end position="80"/>
    </location>
</feature>
<feature type="domain" description="4Fe-4S ferredoxin-type 2" evidence="1">
    <location>
        <begin position="90"/>
        <end position="119"/>
    </location>
</feature>
<feature type="binding site" evidence="1">
    <location>
        <position position="60"/>
    </location>
    <ligand>
        <name>[4Fe-4S] cluster</name>
        <dbReference type="ChEBI" id="CHEBI:49883"/>
        <label>1</label>
    </ligand>
</feature>
<feature type="binding site" evidence="1">
    <location>
        <position position="63"/>
    </location>
    <ligand>
        <name>[4Fe-4S] cluster</name>
        <dbReference type="ChEBI" id="CHEBI:49883"/>
        <label>1</label>
    </ligand>
</feature>
<feature type="binding site" evidence="1">
    <location>
        <position position="66"/>
    </location>
    <ligand>
        <name>[4Fe-4S] cluster</name>
        <dbReference type="ChEBI" id="CHEBI:49883"/>
        <label>1</label>
    </ligand>
</feature>
<feature type="binding site" evidence="1">
    <location>
        <position position="70"/>
    </location>
    <ligand>
        <name>[4Fe-4S] cluster</name>
        <dbReference type="ChEBI" id="CHEBI:49883"/>
        <label>2</label>
    </ligand>
</feature>
<feature type="binding site" evidence="1">
    <location>
        <position position="99"/>
    </location>
    <ligand>
        <name>[4Fe-4S] cluster</name>
        <dbReference type="ChEBI" id="CHEBI:49883"/>
        <label>2</label>
    </ligand>
</feature>
<feature type="binding site" evidence="1">
    <location>
        <position position="102"/>
    </location>
    <ligand>
        <name>[4Fe-4S] cluster</name>
        <dbReference type="ChEBI" id="CHEBI:49883"/>
        <label>2</label>
    </ligand>
</feature>
<feature type="binding site" evidence="1">
    <location>
        <position position="105"/>
    </location>
    <ligand>
        <name>[4Fe-4S] cluster</name>
        <dbReference type="ChEBI" id="CHEBI:49883"/>
        <label>2</label>
    </ligand>
</feature>
<feature type="binding site" evidence="1">
    <location>
        <position position="109"/>
    </location>
    <ligand>
        <name>[4Fe-4S] cluster</name>
        <dbReference type="ChEBI" id="CHEBI:49883"/>
        <label>1</label>
    </ligand>
</feature>
<proteinExistence type="inferred from homology"/>
<keyword id="KW-0004">4Fe-4S</keyword>
<keyword id="KW-0997">Cell inner membrane</keyword>
<keyword id="KW-1003">Cell membrane</keyword>
<keyword id="KW-0408">Iron</keyword>
<keyword id="KW-0411">Iron-sulfur</keyword>
<keyword id="KW-0472">Membrane</keyword>
<keyword id="KW-0479">Metal-binding</keyword>
<keyword id="KW-0520">NAD</keyword>
<keyword id="KW-0874">Quinone</keyword>
<keyword id="KW-0677">Repeat</keyword>
<keyword id="KW-1278">Translocase</keyword>
<keyword id="KW-0830">Ubiquinone</keyword>
<gene>
    <name evidence="1" type="primary">nuoI</name>
    <name type="ordered locus">RMA_1246</name>
</gene>
<comment type="function">
    <text evidence="1">NDH-1 shuttles electrons from NADH, via FMN and iron-sulfur (Fe-S) centers, to quinones in the respiratory chain. The immediate electron acceptor for the enzyme in this species is believed to be ubiquinone. Couples the redox reaction to proton translocation (for every two electrons transferred, four hydrogen ions are translocated across the cytoplasmic membrane), and thus conserves the redox energy in a proton gradient.</text>
</comment>
<comment type="catalytic activity">
    <reaction evidence="1">
        <text>a quinone + NADH + 5 H(+)(in) = a quinol + NAD(+) + 4 H(+)(out)</text>
        <dbReference type="Rhea" id="RHEA:57888"/>
        <dbReference type="ChEBI" id="CHEBI:15378"/>
        <dbReference type="ChEBI" id="CHEBI:24646"/>
        <dbReference type="ChEBI" id="CHEBI:57540"/>
        <dbReference type="ChEBI" id="CHEBI:57945"/>
        <dbReference type="ChEBI" id="CHEBI:132124"/>
    </reaction>
</comment>
<comment type="cofactor">
    <cofactor evidence="1">
        <name>[4Fe-4S] cluster</name>
        <dbReference type="ChEBI" id="CHEBI:49883"/>
    </cofactor>
    <text evidence="1">Binds 2 [4Fe-4S] clusters per subunit.</text>
</comment>
<comment type="subunit">
    <text evidence="1">NDH-1 is composed of 14 different subunits. Subunits NuoA, H, J, K, L, M, N constitute the membrane sector of the complex.</text>
</comment>
<comment type="subcellular location">
    <subcellularLocation>
        <location evidence="1">Cell inner membrane</location>
        <topology evidence="1">Peripheral membrane protein</topology>
    </subcellularLocation>
</comment>
<comment type="similarity">
    <text evidence="1">Belongs to the complex I 23 kDa subunit family.</text>
</comment>
<comment type="sequence caution" evidence="2">
    <conflict type="erroneous initiation">
        <sequence resource="EMBL-CDS" id="ABV85220"/>
    </conflict>
</comment>
<reference key="1">
    <citation type="journal article" date="2007" name="Genome Res.">
        <title>Lateral gene transfer between obligate intracellular bacteria: evidence from the Rickettsia massiliae genome.</title>
        <authorList>
            <person name="Blanc G."/>
            <person name="Ogata H."/>
            <person name="Robert C."/>
            <person name="Audic S."/>
            <person name="Claverie J.-M."/>
            <person name="Raoult D."/>
        </authorList>
    </citation>
    <scope>NUCLEOTIDE SEQUENCE [LARGE SCALE GENOMIC DNA]</scope>
    <source>
        <strain>Mtu5</strain>
    </source>
</reference>
<evidence type="ECO:0000255" key="1">
    <source>
        <dbReference type="HAMAP-Rule" id="MF_01351"/>
    </source>
</evidence>
<evidence type="ECO:0000305" key="2"/>
<name>NUOI_RICM5</name>
<organism>
    <name type="scientific">Rickettsia massiliae (strain Mtu5)</name>
    <dbReference type="NCBI Taxonomy" id="416276"/>
    <lineage>
        <taxon>Bacteria</taxon>
        <taxon>Pseudomonadati</taxon>
        <taxon>Pseudomonadota</taxon>
        <taxon>Alphaproteobacteria</taxon>
        <taxon>Rickettsiales</taxon>
        <taxon>Rickettsiaceae</taxon>
        <taxon>Rickettsieae</taxon>
        <taxon>Rickettsia</taxon>
        <taxon>spotted fever group</taxon>
    </lineage>
</organism>
<protein>
    <recommendedName>
        <fullName evidence="1">NADH-quinone oxidoreductase subunit I</fullName>
        <ecNumber evidence="1">7.1.1.-</ecNumber>
    </recommendedName>
    <alternativeName>
        <fullName evidence="1">NADH dehydrogenase I subunit I</fullName>
    </alternativeName>
    <alternativeName>
        <fullName evidence="1">NDH-1 subunit I</fullName>
    </alternativeName>
</protein>
<sequence length="159" mass="18499">MINYLKSFFLYEIVRGMALTLKYFFKPKVTINYPYEKSPVSPRFKGEHALRRYENGEERCIACKLCEAICPAQAIVIEADEREDGSRRTTRYDIDMTKCIYCGLCQAACPVDAIVEGPNFEFASLTHTALIYDKERLLQNGDRWEQALASKLHKDYEYR</sequence>
<accession>A8F2T4</accession>
<dbReference type="EC" id="7.1.1.-" evidence="1"/>
<dbReference type="EMBL" id="CP000683">
    <property type="protein sequence ID" value="ABV85220.1"/>
    <property type="status" value="ALT_INIT"/>
    <property type="molecule type" value="Genomic_DNA"/>
</dbReference>
<dbReference type="RefSeq" id="WP_014365379.1">
    <property type="nucleotide sequence ID" value="NC_009900.1"/>
</dbReference>
<dbReference type="SMR" id="A8F2T4"/>
<dbReference type="KEGG" id="rms:RMA_1246"/>
<dbReference type="HOGENOM" id="CLU_067218_5_1_5"/>
<dbReference type="Proteomes" id="UP000001311">
    <property type="component" value="Chromosome"/>
</dbReference>
<dbReference type="GO" id="GO:0005886">
    <property type="term" value="C:plasma membrane"/>
    <property type="evidence" value="ECO:0007669"/>
    <property type="project" value="UniProtKB-SubCell"/>
</dbReference>
<dbReference type="GO" id="GO:0051539">
    <property type="term" value="F:4 iron, 4 sulfur cluster binding"/>
    <property type="evidence" value="ECO:0007669"/>
    <property type="project" value="UniProtKB-KW"/>
</dbReference>
<dbReference type="GO" id="GO:0005506">
    <property type="term" value="F:iron ion binding"/>
    <property type="evidence" value="ECO:0007669"/>
    <property type="project" value="UniProtKB-UniRule"/>
</dbReference>
<dbReference type="GO" id="GO:0050136">
    <property type="term" value="F:NADH:ubiquinone reductase (non-electrogenic) activity"/>
    <property type="evidence" value="ECO:0007669"/>
    <property type="project" value="UniProtKB-UniRule"/>
</dbReference>
<dbReference type="GO" id="GO:0048038">
    <property type="term" value="F:quinone binding"/>
    <property type="evidence" value="ECO:0007669"/>
    <property type="project" value="UniProtKB-KW"/>
</dbReference>
<dbReference type="GO" id="GO:0009060">
    <property type="term" value="P:aerobic respiration"/>
    <property type="evidence" value="ECO:0007669"/>
    <property type="project" value="TreeGrafter"/>
</dbReference>
<dbReference type="FunFam" id="3.30.70.3270:FF:000001">
    <property type="entry name" value="NADH-quinone oxidoreductase subunit I 1"/>
    <property type="match status" value="1"/>
</dbReference>
<dbReference type="Gene3D" id="3.30.70.3270">
    <property type="match status" value="1"/>
</dbReference>
<dbReference type="HAMAP" id="MF_01351">
    <property type="entry name" value="NDH1_NuoI"/>
    <property type="match status" value="1"/>
</dbReference>
<dbReference type="InterPro" id="IPR017896">
    <property type="entry name" value="4Fe4S_Fe-S-bd"/>
</dbReference>
<dbReference type="InterPro" id="IPR017900">
    <property type="entry name" value="4Fe4S_Fe_S_CS"/>
</dbReference>
<dbReference type="InterPro" id="IPR010226">
    <property type="entry name" value="NADH_quinone_OxRdtase_chainI"/>
</dbReference>
<dbReference type="NCBIfam" id="TIGR01971">
    <property type="entry name" value="NuoI"/>
    <property type="match status" value="1"/>
</dbReference>
<dbReference type="NCBIfam" id="NF004538">
    <property type="entry name" value="PRK05888.1-4"/>
    <property type="match status" value="1"/>
</dbReference>
<dbReference type="NCBIfam" id="NF004539">
    <property type="entry name" value="PRK05888.1-5"/>
    <property type="match status" value="1"/>
</dbReference>
<dbReference type="PANTHER" id="PTHR10849:SF20">
    <property type="entry name" value="NADH DEHYDROGENASE [UBIQUINONE] IRON-SULFUR PROTEIN 8, MITOCHONDRIAL"/>
    <property type="match status" value="1"/>
</dbReference>
<dbReference type="PANTHER" id="PTHR10849">
    <property type="entry name" value="NADH DEHYDROGENASE UBIQUINONE IRON-SULFUR PROTEIN 8, MITOCHONDRIAL"/>
    <property type="match status" value="1"/>
</dbReference>
<dbReference type="Pfam" id="PF12838">
    <property type="entry name" value="Fer4_7"/>
    <property type="match status" value="1"/>
</dbReference>
<dbReference type="SUPFAM" id="SSF54862">
    <property type="entry name" value="4Fe-4S ferredoxins"/>
    <property type="match status" value="1"/>
</dbReference>
<dbReference type="PROSITE" id="PS00198">
    <property type="entry name" value="4FE4S_FER_1"/>
    <property type="match status" value="2"/>
</dbReference>
<dbReference type="PROSITE" id="PS51379">
    <property type="entry name" value="4FE4S_FER_2"/>
    <property type="match status" value="2"/>
</dbReference>